<reference key="1">
    <citation type="submission" date="2001-05" db="EMBL/GenBank/DDBJ databases">
        <title>Evidence of two genetically deeply divergent species of warthog, Phacochoerus africanus and P. aethiopicus (Artiodactyla: Suiformes) in East Africa.</title>
        <authorList>
            <person name="Randi E."/>
            <person name="d'Huart J.P."/>
            <person name="Lucchini V."/>
            <person name="Aman R."/>
        </authorList>
    </citation>
    <scope>NUCLEOTIDE SEQUENCE [GENOMIC DNA]</scope>
    <source>
        <strain>Isolate Pafr3</strain>
    </source>
</reference>
<evidence type="ECO:0000250" key="1"/>
<evidence type="ECO:0000250" key="2">
    <source>
        <dbReference type="UniProtKB" id="P00157"/>
    </source>
</evidence>
<evidence type="ECO:0000255" key="3">
    <source>
        <dbReference type="PROSITE-ProRule" id="PRU00967"/>
    </source>
</evidence>
<evidence type="ECO:0000255" key="4">
    <source>
        <dbReference type="PROSITE-ProRule" id="PRU00968"/>
    </source>
</evidence>
<protein>
    <recommendedName>
        <fullName>Cytochrome b</fullName>
    </recommendedName>
    <alternativeName>
        <fullName>Complex III subunit 3</fullName>
    </alternativeName>
    <alternativeName>
        <fullName>Complex III subunit III</fullName>
    </alternativeName>
    <alternativeName>
        <fullName>Cytochrome b-c1 complex subunit 3</fullName>
    </alternativeName>
    <alternativeName>
        <fullName>Ubiquinol-cytochrome-c reductase complex cytochrome b subunit</fullName>
    </alternativeName>
</protein>
<proteinExistence type="inferred from homology"/>
<gene>
    <name type="primary">MT-CYB</name>
    <name type="synonym">COB</name>
    <name type="synonym">CYTB</name>
    <name type="synonym">MTCYB</name>
</gene>
<accession>Q8M706</accession>
<organism>
    <name type="scientific">Phacochoerus africanus</name>
    <name type="common">Warthog</name>
    <dbReference type="NCBI Taxonomy" id="41426"/>
    <lineage>
        <taxon>Eukaryota</taxon>
        <taxon>Metazoa</taxon>
        <taxon>Chordata</taxon>
        <taxon>Craniata</taxon>
        <taxon>Vertebrata</taxon>
        <taxon>Euteleostomi</taxon>
        <taxon>Mammalia</taxon>
        <taxon>Eutheria</taxon>
        <taxon>Laurasiatheria</taxon>
        <taxon>Artiodactyla</taxon>
        <taxon>Suina</taxon>
        <taxon>Suidae</taxon>
        <taxon>Phacochoerus</taxon>
    </lineage>
</organism>
<dbReference type="EMBL" id="AJ314548">
    <property type="protein sequence ID" value="CAC85248.1"/>
    <property type="molecule type" value="Genomic_DNA"/>
</dbReference>
<dbReference type="RefSeq" id="YP_001023775.1">
    <property type="nucleotide sequence ID" value="NC_008830.1"/>
</dbReference>
<dbReference type="SMR" id="Q8M706"/>
<dbReference type="GeneID" id="4788332"/>
<dbReference type="CTD" id="4519"/>
<dbReference type="GO" id="GO:0005743">
    <property type="term" value="C:mitochondrial inner membrane"/>
    <property type="evidence" value="ECO:0007669"/>
    <property type="project" value="UniProtKB-SubCell"/>
</dbReference>
<dbReference type="GO" id="GO:0045275">
    <property type="term" value="C:respiratory chain complex III"/>
    <property type="evidence" value="ECO:0007669"/>
    <property type="project" value="InterPro"/>
</dbReference>
<dbReference type="GO" id="GO:0046872">
    <property type="term" value="F:metal ion binding"/>
    <property type="evidence" value="ECO:0007669"/>
    <property type="project" value="UniProtKB-KW"/>
</dbReference>
<dbReference type="GO" id="GO:0008121">
    <property type="term" value="F:ubiquinol-cytochrome-c reductase activity"/>
    <property type="evidence" value="ECO:0007669"/>
    <property type="project" value="InterPro"/>
</dbReference>
<dbReference type="GO" id="GO:0006122">
    <property type="term" value="P:mitochondrial electron transport, ubiquinol to cytochrome c"/>
    <property type="evidence" value="ECO:0007669"/>
    <property type="project" value="TreeGrafter"/>
</dbReference>
<dbReference type="CDD" id="cd00290">
    <property type="entry name" value="cytochrome_b_C"/>
    <property type="match status" value="1"/>
</dbReference>
<dbReference type="CDD" id="cd00284">
    <property type="entry name" value="Cytochrome_b_N"/>
    <property type="match status" value="1"/>
</dbReference>
<dbReference type="FunFam" id="1.20.810.10:FF:000002">
    <property type="entry name" value="Cytochrome b"/>
    <property type="match status" value="1"/>
</dbReference>
<dbReference type="Gene3D" id="1.20.810.10">
    <property type="entry name" value="Cytochrome Bc1 Complex, Chain C"/>
    <property type="match status" value="1"/>
</dbReference>
<dbReference type="InterPro" id="IPR005798">
    <property type="entry name" value="Cyt_b/b6_C"/>
</dbReference>
<dbReference type="InterPro" id="IPR036150">
    <property type="entry name" value="Cyt_b/b6_C_sf"/>
</dbReference>
<dbReference type="InterPro" id="IPR005797">
    <property type="entry name" value="Cyt_b/b6_N"/>
</dbReference>
<dbReference type="InterPro" id="IPR027387">
    <property type="entry name" value="Cytb/b6-like_sf"/>
</dbReference>
<dbReference type="InterPro" id="IPR030689">
    <property type="entry name" value="Cytochrome_b"/>
</dbReference>
<dbReference type="InterPro" id="IPR048260">
    <property type="entry name" value="Cytochrome_b_C_euk/bac"/>
</dbReference>
<dbReference type="InterPro" id="IPR048259">
    <property type="entry name" value="Cytochrome_b_N_euk/bac"/>
</dbReference>
<dbReference type="InterPro" id="IPR016174">
    <property type="entry name" value="Di-haem_cyt_TM"/>
</dbReference>
<dbReference type="PANTHER" id="PTHR19271">
    <property type="entry name" value="CYTOCHROME B"/>
    <property type="match status" value="1"/>
</dbReference>
<dbReference type="PANTHER" id="PTHR19271:SF16">
    <property type="entry name" value="CYTOCHROME B"/>
    <property type="match status" value="1"/>
</dbReference>
<dbReference type="Pfam" id="PF00032">
    <property type="entry name" value="Cytochrom_B_C"/>
    <property type="match status" value="1"/>
</dbReference>
<dbReference type="Pfam" id="PF00033">
    <property type="entry name" value="Cytochrome_B"/>
    <property type="match status" value="1"/>
</dbReference>
<dbReference type="PIRSF" id="PIRSF038885">
    <property type="entry name" value="COB"/>
    <property type="match status" value="1"/>
</dbReference>
<dbReference type="SUPFAM" id="SSF81648">
    <property type="entry name" value="a domain/subunit of cytochrome bc1 complex (Ubiquinol-cytochrome c reductase)"/>
    <property type="match status" value="1"/>
</dbReference>
<dbReference type="SUPFAM" id="SSF81342">
    <property type="entry name" value="Transmembrane di-heme cytochromes"/>
    <property type="match status" value="1"/>
</dbReference>
<dbReference type="PROSITE" id="PS51003">
    <property type="entry name" value="CYTB_CTER"/>
    <property type="match status" value="1"/>
</dbReference>
<dbReference type="PROSITE" id="PS51002">
    <property type="entry name" value="CYTB_NTER"/>
    <property type="match status" value="1"/>
</dbReference>
<feature type="chain" id="PRO_0000061379" description="Cytochrome b">
    <location>
        <begin position="1"/>
        <end position="379"/>
    </location>
</feature>
<feature type="transmembrane region" description="Helical" evidence="2">
    <location>
        <begin position="33"/>
        <end position="53"/>
    </location>
</feature>
<feature type="transmembrane region" description="Helical" evidence="2">
    <location>
        <begin position="77"/>
        <end position="98"/>
    </location>
</feature>
<feature type="transmembrane region" description="Helical" evidence="2">
    <location>
        <begin position="113"/>
        <end position="133"/>
    </location>
</feature>
<feature type="transmembrane region" description="Helical" evidence="2">
    <location>
        <begin position="178"/>
        <end position="198"/>
    </location>
</feature>
<feature type="transmembrane region" description="Helical" evidence="2">
    <location>
        <begin position="226"/>
        <end position="246"/>
    </location>
</feature>
<feature type="transmembrane region" description="Helical" evidence="2">
    <location>
        <begin position="288"/>
        <end position="308"/>
    </location>
</feature>
<feature type="transmembrane region" description="Helical" evidence="2">
    <location>
        <begin position="320"/>
        <end position="340"/>
    </location>
</feature>
<feature type="transmembrane region" description="Helical" evidence="2">
    <location>
        <begin position="347"/>
        <end position="367"/>
    </location>
</feature>
<feature type="binding site" description="axial binding residue" evidence="2">
    <location>
        <position position="83"/>
    </location>
    <ligand>
        <name>heme b</name>
        <dbReference type="ChEBI" id="CHEBI:60344"/>
        <label>b562</label>
    </ligand>
    <ligandPart>
        <name>Fe</name>
        <dbReference type="ChEBI" id="CHEBI:18248"/>
    </ligandPart>
</feature>
<feature type="binding site" description="axial binding residue" evidence="2">
    <location>
        <position position="97"/>
    </location>
    <ligand>
        <name>heme b</name>
        <dbReference type="ChEBI" id="CHEBI:60344"/>
        <label>b566</label>
    </ligand>
    <ligandPart>
        <name>Fe</name>
        <dbReference type="ChEBI" id="CHEBI:18248"/>
    </ligandPart>
</feature>
<feature type="binding site" description="axial binding residue" evidence="2">
    <location>
        <position position="182"/>
    </location>
    <ligand>
        <name>heme b</name>
        <dbReference type="ChEBI" id="CHEBI:60344"/>
        <label>b562</label>
    </ligand>
    <ligandPart>
        <name>Fe</name>
        <dbReference type="ChEBI" id="CHEBI:18248"/>
    </ligandPart>
</feature>
<feature type="binding site" description="axial binding residue" evidence="2">
    <location>
        <position position="196"/>
    </location>
    <ligand>
        <name>heme b</name>
        <dbReference type="ChEBI" id="CHEBI:60344"/>
        <label>b566</label>
    </ligand>
    <ligandPart>
        <name>Fe</name>
        <dbReference type="ChEBI" id="CHEBI:18248"/>
    </ligandPart>
</feature>
<feature type="binding site" evidence="2">
    <location>
        <position position="201"/>
    </location>
    <ligand>
        <name>a ubiquinone</name>
        <dbReference type="ChEBI" id="CHEBI:16389"/>
    </ligand>
</feature>
<sequence length="379" mass="42793">MTNIRKSHPLMKIINNAFIDLPAPSNISSWWNFGSLLGICLILQILTGLFLAMHYTSDTTTAFSSVTHICRDVNYGWVIRYLHANGASMFFICLFIHVGRGLYYGSYMFLETWNIGVILLFTVMATAFMGYVLPWGQMSFWGATVITNLLSAIPYIGTNLVEWIWGGFSVDKATLTRFFAFHFILPFIIAALATVHLLFLHETGSNNPTGISSDMDKIPFHPYYTIKDILGALFMMLILLILVLFSPDLLGDPDNYTPANPLNTPPHIKPEWYFLFAYAILRSIPNKLGGVLALVASILILILMPMLHTSKQRSMMFRPLSQCLFWVLVADLITLTWIGGQPVEHPFIIIGQLASILYFLIILVLMPITSIIENNLLKW</sequence>
<geneLocation type="mitochondrion"/>
<keyword id="KW-0249">Electron transport</keyword>
<keyword id="KW-0349">Heme</keyword>
<keyword id="KW-0408">Iron</keyword>
<keyword id="KW-0472">Membrane</keyword>
<keyword id="KW-0479">Metal-binding</keyword>
<keyword id="KW-0496">Mitochondrion</keyword>
<keyword id="KW-0999">Mitochondrion inner membrane</keyword>
<keyword id="KW-0679">Respiratory chain</keyword>
<keyword id="KW-0812">Transmembrane</keyword>
<keyword id="KW-1133">Transmembrane helix</keyword>
<keyword id="KW-0813">Transport</keyword>
<keyword id="KW-0830">Ubiquinone</keyword>
<name>CYB_PHAAF</name>
<comment type="function">
    <text evidence="2">Component of the ubiquinol-cytochrome c reductase complex (complex III or cytochrome b-c1 complex) that is part of the mitochondrial respiratory chain. The b-c1 complex mediates electron transfer from ubiquinol to cytochrome c. Contributes to the generation of a proton gradient across the mitochondrial membrane that is then used for ATP synthesis.</text>
</comment>
<comment type="cofactor">
    <cofactor evidence="2">
        <name>heme b</name>
        <dbReference type="ChEBI" id="CHEBI:60344"/>
    </cofactor>
    <text evidence="2">Binds 2 heme b groups non-covalently.</text>
</comment>
<comment type="subunit">
    <text evidence="2">The cytochrome bc1 complex contains 11 subunits: 3 respiratory subunits (MT-CYB, CYC1 and UQCRFS1), 2 core proteins (UQCRC1 and UQCRC2) and 6 low-molecular weight proteins (UQCRH/QCR6, UQCRB/QCR7, UQCRQ/QCR8, UQCR10/QCR9, UQCR11/QCR10 and a cleavage product of UQCRFS1). This cytochrome bc1 complex then forms a dimer.</text>
</comment>
<comment type="subcellular location">
    <subcellularLocation>
        <location evidence="2">Mitochondrion inner membrane</location>
        <topology evidence="2">Multi-pass membrane protein</topology>
    </subcellularLocation>
</comment>
<comment type="miscellaneous">
    <text evidence="1">Heme 1 (or BL or b562) is low-potential and absorbs at about 562 nm, and heme 2 (or BH or b566) is high-potential and absorbs at about 566 nm.</text>
</comment>
<comment type="similarity">
    <text evidence="3 4">Belongs to the cytochrome b family.</text>
</comment>
<comment type="caution">
    <text evidence="2">The full-length protein contains only eight transmembrane helices, not nine as predicted by bioinformatics tools.</text>
</comment>